<dbReference type="EMBL" id="AF020198">
    <property type="protein sequence ID" value="AAB71193.1"/>
    <property type="molecule type" value="mRNA"/>
</dbReference>
<dbReference type="EMBL" id="AF030001">
    <property type="protein sequence ID" value="AAB82006.1"/>
    <property type="molecule type" value="Genomic_DNA"/>
</dbReference>
<dbReference type="EMBL" id="BC010287">
    <property type="protein sequence ID" value="AAH10287.1"/>
    <property type="molecule type" value="mRNA"/>
</dbReference>
<dbReference type="EMBL" id="BC062147">
    <property type="protein sequence ID" value="AAH62147.1"/>
    <property type="molecule type" value="mRNA"/>
</dbReference>
<dbReference type="CCDS" id="CCDS28648.1"/>
<dbReference type="PIR" id="T09061">
    <property type="entry name" value="T09061"/>
</dbReference>
<dbReference type="RefSeq" id="NP_059491.1">
    <property type="nucleotide sequence ID" value="NM_017463.3"/>
</dbReference>
<dbReference type="SMR" id="O35984"/>
<dbReference type="BioGRID" id="202038">
    <property type="interactions" value="9"/>
</dbReference>
<dbReference type="CORUM" id="O35984"/>
<dbReference type="FunCoup" id="O35984">
    <property type="interactions" value="2478"/>
</dbReference>
<dbReference type="IntAct" id="O35984">
    <property type="interactions" value="9"/>
</dbReference>
<dbReference type="STRING" id="10090.ENSMUSP00000040464"/>
<dbReference type="GlyGen" id="O35984">
    <property type="glycosylation" value="1 site"/>
</dbReference>
<dbReference type="iPTMnet" id="O35984"/>
<dbReference type="PhosphoSitePlus" id="O35984"/>
<dbReference type="jPOST" id="O35984"/>
<dbReference type="PaxDb" id="10090-ENSMUSP00000040464"/>
<dbReference type="PeptideAtlas" id="O35984"/>
<dbReference type="ProteomicsDB" id="287795"/>
<dbReference type="Pumba" id="O35984"/>
<dbReference type="Antibodypedia" id="28518">
    <property type="antibodies" value="214 antibodies from 27 providers"/>
</dbReference>
<dbReference type="DNASU" id="18515"/>
<dbReference type="Ensembl" id="ENSMUST00000038149.13">
    <property type="protein sequence ID" value="ENSMUSP00000040464.7"/>
    <property type="gene ID" value="ENSMUSG00000034673.15"/>
</dbReference>
<dbReference type="GeneID" id="18515"/>
<dbReference type="KEGG" id="mmu:18515"/>
<dbReference type="UCSC" id="uc008ccv.1">
    <property type="organism name" value="mouse"/>
</dbReference>
<dbReference type="AGR" id="MGI:1341793"/>
<dbReference type="CTD" id="5089"/>
<dbReference type="MGI" id="MGI:1341793">
    <property type="gene designation" value="Pbx2"/>
</dbReference>
<dbReference type="VEuPathDB" id="HostDB:ENSMUSG00000034673"/>
<dbReference type="eggNOG" id="KOG0774">
    <property type="taxonomic scope" value="Eukaryota"/>
</dbReference>
<dbReference type="GeneTree" id="ENSGT00940000160293"/>
<dbReference type="InParanoid" id="O35984"/>
<dbReference type="OMA" id="DLARQCN"/>
<dbReference type="OrthoDB" id="4187154at2759"/>
<dbReference type="PhylomeDB" id="O35984"/>
<dbReference type="TreeFam" id="TF314340"/>
<dbReference type="BioGRID-ORCS" id="18515">
    <property type="hits" value="3 hits in 81 CRISPR screens"/>
</dbReference>
<dbReference type="ChiTaRS" id="Pbx2">
    <property type="organism name" value="mouse"/>
</dbReference>
<dbReference type="PRO" id="PR:O35984"/>
<dbReference type="Proteomes" id="UP000000589">
    <property type="component" value="Chromosome 17"/>
</dbReference>
<dbReference type="RNAct" id="O35984">
    <property type="molecule type" value="protein"/>
</dbReference>
<dbReference type="Bgee" id="ENSMUSG00000034673">
    <property type="expression patterns" value="Expressed in undifferentiated genital tubercle and 276 other cell types or tissues"/>
</dbReference>
<dbReference type="ExpressionAtlas" id="O35984">
    <property type="expression patterns" value="baseline and differential"/>
</dbReference>
<dbReference type="GO" id="GO:0005634">
    <property type="term" value="C:nucleus"/>
    <property type="evidence" value="ECO:0000314"/>
    <property type="project" value="MGI"/>
</dbReference>
<dbReference type="GO" id="GO:0005667">
    <property type="term" value="C:transcription regulator complex"/>
    <property type="evidence" value="ECO:0000314"/>
    <property type="project" value="MGI"/>
</dbReference>
<dbReference type="GO" id="GO:0003682">
    <property type="term" value="F:chromatin binding"/>
    <property type="evidence" value="ECO:0000314"/>
    <property type="project" value="MGI"/>
</dbReference>
<dbReference type="GO" id="GO:0001228">
    <property type="term" value="F:DNA-binding transcription activator activity, RNA polymerase II-specific"/>
    <property type="evidence" value="ECO:0007669"/>
    <property type="project" value="Ensembl"/>
</dbReference>
<dbReference type="GO" id="GO:0140297">
    <property type="term" value="F:DNA-binding transcription factor binding"/>
    <property type="evidence" value="ECO:0007669"/>
    <property type="project" value="Ensembl"/>
</dbReference>
<dbReference type="GO" id="GO:0000977">
    <property type="term" value="F:RNA polymerase II transcription regulatory region sequence-specific DNA binding"/>
    <property type="evidence" value="ECO:0007669"/>
    <property type="project" value="Ensembl"/>
</dbReference>
<dbReference type="GO" id="GO:0030326">
    <property type="term" value="P:embryonic limb morphogenesis"/>
    <property type="evidence" value="ECO:0000316"/>
    <property type="project" value="MGI"/>
</dbReference>
<dbReference type="GO" id="GO:0045944">
    <property type="term" value="P:positive regulation of transcription by RNA polymerase II"/>
    <property type="evidence" value="ECO:0000314"/>
    <property type="project" value="MGI"/>
</dbReference>
<dbReference type="GO" id="GO:0009954">
    <property type="term" value="P:proximal/distal pattern formation"/>
    <property type="evidence" value="ECO:0000316"/>
    <property type="project" value="MGI"/>
</dbReference>
<dbReference type="CDD" id="cd00086">
    <property type="entry name" value="homeodomain"/>
    <property type="match status" value="1"/>
</dbReference>
<dbReference type="FunFam" id="1.10.10.60:FF:000008">
    <property type="entry name" value="Pre-B-cell leukemia transcription factor 1"/>
    <property type="match status" value="1"/>
</dbReference>
<dbReference type="Gene3D" id="1.10.10.60">
    <property type="entry name" value="Homeodomain-like"/>
    <property type="match status" value="1"/>
</dbReference>
<dbReference type="InterPro" id="IPR001356">
    <property type="entry name" value="HD"/>
</dbReference>
<dbReference type="InterPro" id="IPR017970">
    <property type="entry name" value="Homeobox_CS"/>
</dbReference>
<dbReference type="InterPro" id="IPR009057">
    <property type="entry name" value="Homeodomain-like_sf"/>
</dbReference>
<dbReference type="InterPro" id="IPR008422">
    <property type="entry name" value="KN_HD"/>
</dbReference>
<dbReference type="InterPro" id="IPR005542">
    <property type="entry name" value="PBX_PBC_dom"/>
</dbReference>
<dbReference type="InterPro" id="IPR050224">
    <property type="entry name" value="TALE_homeobox"/>
</dbReference>
<dbReference type="PANTHER" id="PTHR11850">
    <property type="entry name" value="HOMEOBOX PROTEIN TRANSCRIPTION FACTORS"/>
    <property type="match status" value="1"/>
</dbReference>
<dbReference type="Pfam" id="PF05920">
    <property type="entry name" value="Homeobox_KN"/>
    <property type="match status" value="1"/>
</dbReference>
<dbReference type="Pfam" id="PF03792">
    <property type="entry name" value="PBC"/>
    <property type="match status" value="1"/>
</dbReference>
<dbReference type="SMART" id="SM00389">
    <property type="entry name" value="HOX"/>
    <property type="match status" value="1"/>
</dbReference>
<dbReference type="SUPFAM" id="SSF46689">
    <property type="entry name" value="Homeodomain-like"/>
    <property type="match status" value="1"/>
</dbReference>
<dbReference type="PROSITE" id="PS00027">
    <property type="entry name" value="HOMEOBOX_1"/>
    <property type="match status" value="1"/>
</dbReference>
<dbReference type="PROSITE" id="PS50071">
    <property type="entry name" value="HOMEOBOX_2"/>
    <property type="match status" value="1"/>
</dbReference>
<dbReference type="PROSITE" id="PS51978">
    <property type="entry name" value="PBC"/>
    <property type="match status" value="1"/>
</dbReference>
<name>PBX2_MOUSE</name>
<reference key="1">
    <citation type="submission" date="1997-08" db="EMBL/GenBank/DDBJ databases">
        <authorList>
            <person name="Liu Y."/>
            <person name="MacDonald R.J."/>
        </authorList>
    </citation>
    <scope>NUCLEOTIDE SEQUENCE [MRNA]</scope>
</reference>
<reference key="2">
    <citation type="journal article" date="2003" name="Genome Res.">
        <title>Analysis of the gene-dense major histocompatibility complex class III region and its comparison to mouse.</title>
        <authorList>
            <person name="Xie T."/>
            <person name="Rowen L."/>
            <person name="Aguado B."/>
            <person name="Ahearn M.E."/>
            <person name="Madan A."/>
            <person name="Qin S."/>
            <person name="Campbell R.D."/>
            <person name="Hood L."/>
        </authorList>
    </citation>
    <scope>NUCLEOTIDE SEQUENCE [LARGE SCALE GENOMIC DNA]</scope>
    <source>
        <strain>129</strain>
    </source>
</reference>
<reference key="3">
    <citation type="journal article" date="2004" name="Genome Res.">
        <title>The status, quality, and expansion of the NIH full-length cDNA project: the Mammalian Gene Collection (MGC).</title>
        <authorList>
            <consortium name="The MGC Project Team"/>
        </authorList>
    </citation>
    <scope>NUCLEOTIDE SEQUENCE [LARGE SCALE MRNA]</scope>
    <source>
        <strain>FVB/N</strain>
        <tissue>Limb</tissue>
        <tissue>Mammary gland</tissue>
    </source>
</reference>
<reference key="4">
    <citation type="journal article" date="1999" name="Mol. Cell. Biol.">
        <title>HOXA9 forms triple complexes with PBX2 and MEIS1 in myeloid cells.</title>
        <authorList>
            <person name="Shen W.-F."/>
            <person name="Rozenfeld S."/>
            <person name="Kwong A."/>
            <person name="Koemueves L.G."/>
            <person name="Lawrence H.J."/>
            <person name="Largman C."/>
        </authorList>
    </citation>
    <scope>INTERACTION WITH HOXA9 AND MEIS1</scope>
</reference>
<reference key="5">
    <citation type="journal article" date="2010" name="Cell">
        <title>A tissue-specific atlas of mouse protein phosphorylation and expression.</title>
        <authorList>
            <person name="Huttlin E.L."/>
            <person name="Jedrychowski M.P."/>
            <person name="Elias J.E."/>
            <person name="Goswami T."/>
            <person name="Rad R."/>
            <person name="Beausoleil S.A."/>
            <person name="Villen J."/>
            <person name="Haas W."/>
            <person name="Sowa M.E."/>
            <person name="Gygi S.P."/>
        </authorList>
    </citation>
    <scope>PHOSPHORYLATION [LARGE SCALE ANALYSIS] AT SER-159 AND SER-395</scope>
    <scope>IDENTIFICATION BY MASS SPECTROMETRY [LARGE SCALE ANALYSIS]</scope>
    <source>
        <tissue>Brown adipose tissue</tissue>
        <tissue>Kidney</tissue>
        <tissue>Lung</tissue>
    </source>
</reference>
<feature type="chain" id="PRO_0000049238" description="Pre-B-cell leukemia transcription factor 2">
    <location>
        <begin position="1"/>
        <end position="430"/>
    </location>
</feature>
<feature type="domain" description="PBC" evidence="4">
    <location>
        <begin position="48"/>
        <end position="243"/>
    </location>
</feature>
<feature type="DNA-binding region" description="Homeobox; TALE-type" evidence="3">
    <location>
        <begin position="244"/>
        <end position="306"/>
    </location>
</feature>
<feature type="region of interest" description="Disordered" evidence="5">
    <location>
        <begin position="1"/>
        <end position="52"/>
    </location>
</feature>
<feature type="region of interest" description="PBC-A" evidence="4">
    <location>
        <begin position="55"/>
        <end position="134"/>
    </location>
</feature>
<feature type="region of interest" description="PBC-B" evidence="4">
    <location>
        <begin position="137"/>
        <end position="243"/>
    </location>
</feature>
<feature type="region of interest" description="Disordered" evidence="5">
    <location>
        <begin position="327"/>
        <end position="347"/>
    </location>
</feature>
<feature type="region of interest" description="Disordered" evidence="5">
    <location>
        <begin position="375"/>
        <end position="430"/>
    </location>
</feature>
<feature type="compositionally biased region" description="Gly residues" evidence="5">
    <location>
        <begin position="13"/>
        <end position="48"/>
    </location>
</feature>
<feature type="compositionally biased region" description="Polar residues" evidence="5">
    <location>
        <begin position="409"/>
        <end position="418"/>
    </location>
</feature>
<feature type="modified residue" description="Phosphoserine" evidence="2">
    <location>
        <position position="136"/>
    </location>
</feature>
<feature type="modified residue" description="Phosphoserine" evidence="2">
    <location>
        <position position="151"/>
    </location>
</feature>
<feature type="modified residue" description="Phosphoserine" evidence="7">
    <location>
        <position position="159"/>
    </location>
</feature>
<feature type="modified residue" description="Phosphoserine" evidence="2">
    <location>
        <position position="330"/>
    </location>
</feature>
<feature type="modified residue" description="Phosphoserine" evidence="7">
    <location>
        <position position="395"/>
    </location>
</feature>
<accession>O35984</accession>
<organism>
    <name type="scientific">Mus musculus</name>
    <name type="common">Mouse</name>
    <dbReference type="NCBI Taxonomy" id="10090"/>
    <lineage>
        <taxon>Eukaryota</taxon>
        <taxon>Metazoa</taxon>
        <taxon>Chordata</taxon>
        <taxon>Craniata</taxon>
        <taxon>Vertebrata</taxon>
        <taxon>Euteleostomi</taxon>
        <taxon>Mammalia</taxon>
        <taxon>Eutheria</taxon>
        <taxon>Euarchontoglires</taxon>
        <taxon>Glires</taxon>
        <taxon>Rodentia</taxon>
        <taxon>Myomorpha</taxon>
        <taxon>Muroidea</taxon>
        <taxon>Muridae</taxon>
        <taxon>Murinae</taxon>
        <taxon>Mus</taxon>
        <taxon>Mus</taxon>
    </lineage>
</organism>
<comment type="function">
    <text evidence="1">Transcriptional activator that binds the sequence 5'-ATCAATCAA-3'. Activates transcription of PF4 in complex with MEIS1 (By similarity).</text>
</comment>
<comment type="subunit">
    <text evidence="1">Forms heterodimers with MEIS1 and heterotrimers with MEIS1 and HOXA9. Interacts with PBXIP1 (By similarity).</text>
</comment>
<comment type="subcellular location">
    <subcellularLocation>
        <location evidence="6">Nucleus</location>
    </subcellularLocation>
</comment>
<comment type="similarity">
    <text evidence="6">Belongs to the TALE/PBX homeobox family.</text>
</comment>
<protein>
    <recommendedName>
        <fullName>Pre-B-cell leukemia transcription factor 2</fullName>
    </recommendedName>
    <alternativeName>
        <fullName>Homeobox protein PBX2</fullName>
    </alternativeName>
</protein>
<keyword id="KW-0010">Activator</keyword>
<keyword id="KW-0238">DNA-binding</keyword>
<keyword id="KW-0371">Homeobox</keyword>
<keyword id="KW-0539">Nucleus</keyword>
<keyword id="KW-0597">Phosphoprotein</keyword>
<keyword id="KW-1185">Reference proteome</keyword>
<keyword id="KW-0804">Transcription</keyword>
<keyword id="KW-0805">Transcription regulation</keyword>
<sequence length="430" mass="45809">MDERLLGPPPPGGGRGGLGLVGAEPGGPGEPPGGGDPGGGSGGVPGGRGKQDIGDILQQIMTITDQSLDEAQAKKHALNCHRMKPALFSVLCEIKEKTGLSIRSSQEEEPVDPQLMRLDNMLLAEGVAGPEKGGGSAAAAAAAAASGGGVSPDNSIEHSDYRSKLAQIRHIYHSELEKYEQACNEFTTHVMNLLREQSRTRPVAPKEMERMVSIIHRKFSAIQMQLKQSTCEAVMILRSRFLDARRKRRNFSKQATEVLNEYFYSHLSNPYPSEEAKEELAKKCGITVSQVSNWFGNKRIRYKKNIGKFQEEANIYAVKTAVSVAQGGHSRTSSPTPPSSAGSGGSFNLSGSGDMFLGMPGLNGDSYPASQVESLRHSMGPGSYGDNIGGGQIYSPREIRANGGWQEAVTPSSVTSPTEGPGSVHSDTSN</sequence>
<proteinExistence type="evidence at protein level"/>
<evidence type="ECO:0000250" key="1"/>
<evidence type="ECO:0000250" key="2">
    <source>
        <dbReference type="UniProtKB" id="P40425"/>
    </source>
</evidence>
<evidence type="ECO:0000255" key="3">
    <source>
        <dbReference type="PROSITE-ProRule" id="PRU00108"/>
    </source>
</evidence>
<evidence type="ECO:0000255" key="4">
    <source>
        <dbReference type="PROSITE-ProRule" id="PRU01322"/>
    </source>
</evidence>
<evidence type="ECO:0000256" key="5">
    <source>
        <dbReference type="SAM" id="MobiDB-lite"/>
    </source>
</evidence>
<evidence type="ECO:0000305" key="6"/>
<evidence type="ECO:0007744" key="7">
    <source>
    </source>
</evidence>
<gene>
    <name type="primary">Pbx2</name>
</gene>